<protein>
    <recommendedName>
        <fullName>Putative gustatory receptor 93b</fullName>
    </recommendedName>
</protein>
<feature type="chain" id="PRO_0000216542" description="Putative gustatory receptor 93b">
    <location>
        <begin position="1"/>
        <end position="395"/>
    </location>
</feature>
<feature type="topological domain" description="Cytoplasmic" evidence="1">
    <location>
        <begin position="1"/>
        <end position="18"/>
    </location>
</feature>
<feature type="transmembrane region" description="Helical; Name=1" evidence="2">
    <location>
        <begin position="19"/>
        <end position="39"/>
    </location>
</feature>
<feature type="topological domain" description="Extracellular" evidence="1">
    <location>
        <begin position="40"/>
        <end position="89"/>
    </location>
</feature>
<feature type="transmembrane region" description="Helical; Name=2" evidence="2">
    <location>
        <begin position="90"/>
        <end position="110"/>
    </location>
</feature>
<feature type="topological domain" description="Cytoplasmic" evidence="1">
    <location>
        <begin position="111"/>
        <end position="153"/>
    </location>
</feature>
<feature type="transmembrane region" description="Helical; Name=3" evidence="2">
    <location>
        <begin position="154"/>
        <end position="174"/>
    </location>
</feature>
<feature type="topological domain" description="Extracellular" evidence="1">
    <location>
        <begin position="175"/>
        <end position="183"/>
    </location>
</feature>
<feature type="transmembrane region" description="Helical; Name=4" evidence="2">
    <location>
        <begin position="184"/>
        <end position="204"/>
    </location>
</feature>
<feature type="topological domain" description="Cytoplasmic" evidence="1">
    <location>
        <begin position="205"/>
        <end position="267"/>
    </location>
</feature>
<feature type="transmembrane region" description="Helical; Name=5" evidence="2">
    <location>
        <begin position="268"/>
        <end position="288"/>
    </location>
</feature>
<feature type="topological domain" description="Extracellular" evidence="1">
    <location>
        <begin position="289"/>
        <end position="293"/>
    </location>
</feature>
<feature type="transmembrane region" description="Helical; Name=6" evidence="2">
    <location>
        <begin position="294"/>
        <end position="314"/>
    </location>
</feature>
<feature type="topological domain" description="Cytoplasmic" evidence="1">
    <location>
        <begin position="315"/>
        <end position="369"/>
    </location>
</feature>
<feature type="transmembrane region" description="Helical; Name=7" evidence="2">
    <location>
        <begin position="370"/>
        <end position="390"/>
    </location>
</feature>
<feature type="topological domain" description="Extracellular" evidence="1">
    <location>
        <begin position="391"/>
        <end position="395"/>
    </location>
</feature>
<keyword id="KW-1003">Cell membrane</keyword>
<keyword id="KW-0472">Membrane</keyword>
<keyword id="KW-0675">Receptor</keyword>
<keyword id="KW-1185">Reference proteome</keyword>
<keyword id="KW-0807">Transducer</keyword>
<keyword id="KW-0812">Transmembrane</keyword>
<keyword id="KW-1133">Transmembrane helix</keyword>
<organism>
    <name type="scientific">Drosophila melanogaster</name>
    <name type="common">Fruit fly</name>
    <dbReference type="NCBI Taxonomy" id="7227"/>
    <lineage>
        <taxon>Eukaryota</taxon>
        <taxon>Metazoa</taxon>
        <taxon>Ecdysozoa</taxon>
        <taxon>Arthropoda</taxon>
        <taxon>Hexapoda</taxon>
        <taxon>Insecta</taxon>
        <taxon>Pterygota</taxon>
        <taxon>Neoptera</taxon>
        <taxon>Endopterygota</taxon>
        <taxon>Diptera</taxon>
        <taxon>Brachycera</taxon>
        <taxon>Muscomorpha</taxon>
        <taxon>Ephydroidea</taxon>
        <taxon>Drosophilidae</taxon>
        <taxon>Drosophila</taxon>
        <taxon>Sophophora</taxon>
    </lineage>
</organism>
<sequence>MSGLLVMPRILRCLNVSRISAILLRSCFLYGTFFGVITFRIERKDSQLVAINRRGYLWICLVIRLLASCFYGYSYDAWSGQYEDMYLRAFFGFRLIGCLICSVIILVMQFWFGEELINLVNRFLQLFRRMQSLTNSPKNRFGDRAEFLLMFSKVFSLLFVFMAFRLMLSPWFLLTLVCDLYTSVGTGMITHLCFVGYLSIGVLYRDLNNYVDCQLRAQLRSLNGENNSFRNNPQPTRQAISNLDKCLYLYDEIHQVSRSFQQLFDLPLFLSLAQSLLAMSMVSYHAILRRQYSFNLWGLVIKLLIDVVLLTMSVHSAVNGSRLIRRLSFENFYVTDSQSYHQKLELFLGRLQHQELRVFPLGLFEVSNELTLFFLSAMVTYLVFLVQYGMQSQQI</sequence>
<name>GR93B_DROME</name>
<dbReference type="EMBL" id="AE014297">
    <property type="protein sequence ID" value="AAN13884.2"/>
    <property type="molecule type" value="Genomic_DNA"/>
</dbReference>
<dbReference type="RefSeq" id="NP_732664.2">
    <property type="nucleotide sequence ID" value="NM_169972.2"/>
</dbReference>
<dbReference type="SMR" id="Q8IN23"/>
<dbReference type="FunCoup" id="Q8IN23">
    <property type="interactions" value="5"/>
</dbReference>
<dbReference type="STRING" id="7227.FBpp0288675"/>
<dbReference type="PaxDb" id="7227-FBpp0288675"/>
<dbReference type="EnsemblMetazoa" id="FBtr0290236">
    <property type="protein sequence ID" value="FBpp0288675"/>
    <property type="gene ID" value="FBgn0045470"/>
</dbReference>
<dbReference type="GeneID" id="117472"/>
<dbReference type="KEGG" id="dme:Dmel_CG31336"/>
<dbReference type="AGR" id="FB:FBgn0045470"/>
<dbReference type="CTD" id="117472"/>
<dbReference type="FlyBase" id="FBgn0045470">
    <property type="gene designation" value="Gr93b"/>
</dbReference>
<dbReference type="VEuPathDB" id="VectorBase:FBgn0045470"/>
<dbReference type="eggNOG" id="ENOG502TCT7">
    <property type="taxonomic scope" value="Eukaryota"/>
</dbReference>
<dbReference type="GeneTree" id="ENSGT00540000073758"/>
<dbReference type="HOGENOM" id="CLU_059451_0_0_1"/>
<dbReference type="InParanoid" id="Q8IN23"/>
<dbReference type="OMA" id="TILIMRV"/>
<dbReference type="OrthoDB" id="7860665at2759"/>
<dbReference type="PhylomeDB" id="Q8IN23"/>
<dbReference type="BioGRID-ORCS" id="117472">
    <property type="hits" value="0 hits in 1 CRISPR screen"/>
</dbReference>
<dbReference type="GenomeRNAi" id="117472"/>
<dbReference type="PRO" id="PR:Q8IN23"/>
<dbReference type="Proteomes" id="UP000000803">
    <property type="component" value="Chromosome 3R"/>
</dbReference>
<dbReference type="ExpressionAtlas" id="Q8IN23">
    <property type="expression patterns" value="baseline and differential"/>
</dbReference>
<dbReference type="GO" id="GO:0030424">
    <property type="term" value="C:axon"/>
    <property type="evidence" value="ECO:0000318"/>
    <property type="project" value="GO_Central"/>
</dbReference>
<dbReference type="GO" id="GO:0030425">
    <property type="term" value="C:dendrite"/>
    <property type="evidence" value="ECO:0000318"/>
    <property type="project" value="GO_Central"/>
</dbReference>
<dbReference type="GO" id="GO:0016020">
    <property type="term" value="C:membrane"/>
    <property type="evidence" value="ECO:0000303"/>
    <property type="project" value="UniProtKB"/>
</dbReference>
<dbReference type="GO" id="GO:0043025">
    <property type="term" value="C:neuronal cell body"/>
    <property type="evidence" value="ECO:0000318"/>
    <property type="project" value="GO_Central"/>
</dbReference>
<dbReference type="GO" id="GO:0005886">
    <property type="term" value="C:plasma membrane"/>
    <property type="evidence" value="ECO:0000250"/>
    <property type="project" value="FlyBase"/>
</dbReference>
<dbReference type="GO" id="GO:0015276">
    <property type="term" value="F:ligand-gated monoatomic ion channel activity"/>
    <property type="evidence" value="ECO:0000250"/>
    <property type="project" value="FlyBase"/>
</dbReference>
<dbReference type="GO" id="GO:0008527">
    <property type="term" value="F:taste receptor activity"/>
    <property type="evidence" value="ECO:0000303"/>
    <property type="project" value="UniProtKB"/>
</dbReference>
<dbReference type="GO" id="GO:0007635">
    <property type="term" value="P:chemosensory behavior"/>
    <property type="evidence" value="ECO:0000318"/>
    <property type="project" value="GO_Central"/>
</dbReference>
<dbReference type="GO" id="GO:0008049">
    <property type="term" value="P:male courtship behavior"/>
    <property type="evidence" value="ECO:0000318"/>
    <property type="project" value="GO_Central"/>
</dbReference>
<dbReference type="GO" id="GO:0034220">
    <property type="term" value="P:monoatomic ion transmembrane transport"/>
    <property type="evidence" value="ECO:0000250"/>
    <property type="project" value="FlyBase"/>
</dbReference>
<dbReference type="GO" id="GO:0050909">
    <property type="term" value="P:sensory perception of taste"/>
    <property type="evidence" value="ECO:0000303"/>
    <property type="project" value="UniProtKB"/>
</dbReference>
<dbReference type="GO" id="GO:0007165">
    <property type="term" value="P:signal transduction"/>
    <property type="evidence" value="ECO:0007669"/>
    <property type="project" value="UniProtKB-KW"/>
</dbReference>
<dbReference type="InterPro" id="IPR013604">
    <property type="entry name" value="7TM_chemorcpt"/>
</dbReference>
<dbReference type="Pfam" id="PF08395">
    <property type="entry name" value="7tm_7"/>
    <property type="match status" value="1"/>
</dbReference>
<reference evidence="5" key="1">
    <citation type="journal article" date="2000" name="Science">
        <title>The genome sequence of Drosophila melanogaster.</title>
        <authorList>
            <person name="Adams M.D."/>
            <person name="Celniker S.E."/>
            <person name="Holt R.A."/>
            <person name="Evans C.A."/>
            <person name="Gocayne J.D."/>
            <person name="Amanatides P.G."/>
            <person name="Scherer S.E."/>
            <person name="Li P.W."/>
            <person name="Hoskins R.A."/>
            <person name="Galle R.F."/>
            <person name="George R.A."/>
            <person name="Lewis S.E."/>
            <person name="Richards S."/>
            <person name="Ashburner M."/>
            <person name="Henderson S.N."/>
            <person name="Sutton G.G."/>
            <person name="Wortman J.R."/>
            <person name="Yandell M.D."/>
            <person name="Zhang Q."/>
            <person name="Chen L.X."/>
            <person name="Brandon R.C."/>
            <person name="Rogers Y.-H.C."/>
            <person name="Blazej R.G."/>
            <person name="Champe M."/>
            <person name="Pfeiffer B.D."/>
            <person name="Wan K.H."/>
            <person name="Doyle C."/>
            <person name="Baxter E.G."/>
            <person name="Helt G."/>
            <person name="Nelson C.R."/>
            <person name="Miklos G.L.G."/>
            <person name="Abril J.F."/>
            <person name="Agbayani A."/>
            <person name="An H.-J."/>
            <person name="Andrews-Pfannkoch C."/>
            <person name="Baldwin D."/>
            <person name="Ballew R.M."/>
            <person name="Basu A."/>
            <person name="Baxendale J."/>
            <person name="Bayraktaroglu L."/>
            <person name="Beasley E.M."/>
            <person name="Beeson K.Y."/>
            <person name="Benos P.V."/>
            <person name="Berman B.P."/>
            <person name="Bhandari D."/>
            <person name="Bolshakov S."/>
            <person name="Borkova D."/>
            <person name="Botchan M.R."/>
            <person name="Bouck J."/>
            <person name="Brokstein P."/>
            <person name="Brottier P."/>
            <person name="Burtis K.C."/>
            <person name="Busam D.A."/>
            <person name="Butler H."/>
            <person name="Cadieu E."/>
            <person name="Center A."/>
            <person name="Chandra I."/>
            <person name="Cherry J.M."/>
            <person name="Cawley S."/>
            <person name="Dahlke C."/>
            <person name="Davenport L.B."/>
            <person name="Davies P."/>
            <person name="de Pablos B."/>
            <person name="Delcher A."/>
            <person name="Deng Z."/>
            <person name="Mays A.D."/>
            <person name="Dew I."/>
            <person name="Dietz S.M."/>
            <person name="Dodson K."/>
            <person name="Doup L.E."/>
            <person name="Downes M."/>
            <person name="Dugan-Rocha S."/>
            <person name="Dunkov B.C."/>
            <person name="Dunn P."/>
            <person name="Durbin K.J."/>
            <person name="Evangelista C.C."/>
            <person name="Ferraz C."/>
            <person name="Ferriera S."/>
            <person name="Fleischmann W."/>
            <person name="Fosler C."/>
            <person name="Gabrielian A.E."/>
            <person name="Garg N.S."/>
            <person name="Gelbart W.M."/>
            <person name="Glasser K."/>
            <person name="Glodek A."/>
            <person name="Gong F."/>
            <person name="Gorrell J.H."/>
            <person name="Gu Z."/>
            <person name="Guan P."/>
            <person name="Harris M."/>
            <person name="Harris N.L."/>
            <person name="Harvey D.A."/>
            <person name="Heiman T.J."/>
            <person name="Hernandez J.R."/>
            <person name="Houck J."/>
            <person name="Hostin D."/>
            <person name="Houston K.A."/>
            <person name="Howland T.J."/>
            <person name="Wei M.-H."/>
            <person name="Ibegwam C."/>
            <person name="Jalali M."/>
            <person name="Kalush F."/>
            <person name="Karpen G.H."/>
            <person name="Ke Z."/>
            <person name="Kennison J.A."/>
            <person name="Ketchum K.A."/>
            <person name="Kimmel B.E."/>
            <person name="Kodira C.D."/>
            <person name="Kraft C.L."/>
            <person name="Kravitz S."/>
            <person name="Kulp D."/>
            <person name="Lai Z."/>
            <person name="Lasko P."/>
            <person name="Lei Y."/>
            <person name="Levitsky A.A."/>
            <person name="Li J.H."/>
            <person name="Li Z."/>
            <person name="Liang Y."/>
            <person name="Lin X."/>
            <person name="Liu X."/>
            <person name="Mattei B."/>
            <person name="McIntosh T.C."/>
            <person name="McLeod M.P."/>
            <person name="McPherson D."/>
            <person name="Merkulov G."/>
            <person name="Milshina N.V."/>
            <person name="Mobarry C."/>
            <person name="Morris J."/>
            <person name="Moshrefi A."/>
            <person name="Mount S.M."/>
            <person name="Moy M."/>
            <person name="Murphy B."/>
            <person name="Murphy L."/>
            <person name="Muzny D.M."/>
            <person name="Nelson D.L."/>
            <person name="Nelson D.R."/>
            <person name="Nelson K.A."/>
            <person name="Nixon K."/>
            <person name="Nusskern D.R."/>
            <person name="Pacleb J.M."/>
            <person name="Palazzolo M."/>
            <person name="Pittman G.S."/>
            <person name="Pan S."/>
            <person name="Pollard J."/>
            <person name="Puri V."/>
            <person name="Reese M.G."/>
            <person name="Reinert K."/>
            <person name="Remington K."/>
            <person name="Saunders R.D.C."/>
            <person name="Scheeler F."/>
            <person name="Shen H."/>
            <person name="Shue B.C."/>
            <person name="Siden-Kiamos I."/>
            <person name="Simpson M."/>
            <person name="Skupski M.P."/>
            <person name="Smith T.J."/>
            <person name="Spier E."/>
            <person name="Spradling A.C."/>
            <person name="Stapleton M."/>
            <person name="Strong R."/>
            <person name="Sun E."/>
            <person name="Svirskas R."/>
            <person name="Tector C."/>
            <person name="Turner R."/>
            <person name="Venter E."/>
            <person name="Wang A.H."/>
            <person name="Wang X."/>
            <person name="Wang Z.-Y."/>
            <person name="Wassarman D.A."/>
            <person name="Weinstock G.M."/>
            <person name="Weissenbach J."/>
            <person name="Williams S.M."/>
            <person name="Woodage T."/>
            <person name="Worley K.C."/>
            <person name="Wu D."/>
            <person name="Yang S."/>
            <person name="Yao Q.A."/>
            <person name="Ye J."/>
            <person name="Yeh R.-F."/>
            <person name="Zaveri J.S."/>
            <person name="Zhan M."/>
            <person name="Zhang G."/>
            <person name="Zhao Q."/>
            <person name="Zheng L."/>
            <person name="Zheng X.H."/>
            <person name="Zhong F.N."/>
            <person name="Zhong W."/>
            <person name="Zhou X."/>
            <person name="Zhu S.C."/>
            <person name="Zhu X."/>
            <person name="Smith H.O."/>
            <person name="Gibbs R.A."/>
            <person name="Myers E.W."/>
            <person name="Rubin G.M."/>
            <person name="Venter J.C."/>
        </authorList>
    </citation>
    <scope>NUCLEOTIDE SEQUENCE [LARGE SCALE GENOMIC DNA]</scope>
    <source>
        <strain evidence="3">Berkeley</strain>
    </source>
</reference>
<reference evidence="5" key="2">
    <citation type="journal article" date="2002" name="Genome Biol.">
        <title>Annotation of the Drosophila melanogaster euchromatic genome: a systematic review.</title>
        <authorList>
            <person name="Misra S."/>
            <person name="Crosby M.A."/>
            <person name="Mungall C.J."/>
            <person name="Matthews B.B."/>
            <person name="Campbell K.S."/>
            <person name="Hradecky P."/>
            <person name="Huang Y."/>
            <person name="Kaminker J.S."/>
            <person name="Millburn G.H."/>
            <person name="Prochnik S.E."/>
            <person name="Smith C.D."/>
            <person name="Tupy J.L."/>
            <person name="Whitfield E.J."/>
            <person name="Bayraktaroglu L."/>
            <person name="Berman B.P."/>
            <person name="Bettencourt B.R."/>
            <person name="Celniker S.E."/>
            <person name="de Grey A.D.N.J."/>
            <person name="Drysdale R.A."/>
            <person name="Harris N.L."/>
            <person name="Richter J."/>
            <person name="Russo S."/>
            <person name="Schroeder A.J."/>
            <person name="Shu S.Q."/>
            <person name="Stapleton M."/>
            <person name="Yamada C."/>
            <person name="Ashburner M."/>
            <person name="Gelbart W.M."/>
            <person name="Rubin G.M."/>
            <person name="Lewis S.E."/>
        </authorList>
    </citation>
    <scope>GENOME REANNOTATION</scope>
    <source>
        <strain>Berkeley</strain>
    </source>
</reference>
<reference evidence="5" key="3">
    <citation type="journal article" date="2000" name="Science">
        <title>Candidate taste receptors in Drosophila.</title>
        <authorList>
            <person name="Clyne P.J."/>
            <person name="Warr C.G."/>
            <person name="Carlson J.R."/>
        </authorList>
    </citation>
    <scope>IDENTIFICATION</scope>
</reference>
<reference evidence="5" key="4">
    <citation type="journal article" date="2001" name="Curr. Biol.">
        <title>Spatially restricted expression of candidate taste receptors in the Drosophila gustatory system.</title>
        <authorList>
            <person name="Dunipace L."/>
            <person name="Meister S."/>
            <person name="McNealy C."/>
            <person name="Amrein H."/>
        </authorList>
    </citation>
    <scope>IDENTIFICATION</scope>
</reference>
<reference key="5">
    <citation type="journal article" date="2011" name="J. Neurosci.">
        <title>Molecular and cellular organization of the taste system in the Drosophila larva.</title>
        <authorList>
            <person name="Kwon J.Y."/>
            <person name="Dahanukar A."/>
            <person name="Weiss L.A."/>
            <person name="Carlson J.R."/>
        </authorList>
    </citation>
    <scope>TISSUE SPECIFICITY</scope>
</reference>
<accession>Q8IN23</accession>
<comment type="function">
    <text evidence="1">Probable gustatory receptor which mediates acceptance or avoidance behavior, depending on its substrates.</text>
</comment>
<comment type="subcellular location">
    <subcellularLocation>
        <location evidence="1">Cell membrane</location>
        <topology evidence="1">Multi-pass membrane protein</topology>
    </subcellularLocation>
</comment>
<comment type="tissue specificity">
    <text evidence="4">In larvae, is expressed in neurons of the terminal external chemosensory organ and of the dorsal pharyngeal sense organ.</text>
</comment>
<comment type="similarity">
    <text evidence="5">Belongs to the insect chemoreceptor superfamily. Gustatory receptor (GR) family. Gr93a subfamily.</text>
</comment>
<gene>
    <name type="primary">Gr93b</name>
    <name type="synonym">GR93F.2</name>
    <name type="ORF">CG31336</name>
</gene>
<proteinExistence type="evidence at transcript level"/>
<evidence type="ECO:0000250" key="1"/>
<evidence type="ECO:0000255" key="2"/>
<evidence type="ECO:0000269" key="3">
    <source>
    </source>
</evidence>
<evidence type="ECO:0000269" key="4">
    <source>
    </source>
</evidence>
<evidence type="ECO:0000305" key="5"/>